<accession>C3MWN2</accession>
<reference key="1">
    <citation type="journal article" date="2009" name="Proc. Natl. Acad. Sci. U.S.A.">
        <title>Biogeography of the Sulfolobus islandicus pan-genome.</title>
        <authorList>
            <person name="Reno M.L."/>
            <person name="Held N.L."/>
            <person name="Fields C.J."/>
            <person name="Burke P.V."/>
            <person name="Whitaker R.J."/>
        </authorList>
    </citation>
    <scope>NUCLEOTIDE SEQUENCE [LARGE SCALE GENOMIC DNA]</scope>
    <source>
        <strain>M.14.25 / Kamchatka #1</strain>
    </source>
</reference>
<sequence>MSFPKELEKVLEITKAQNVWRRTQTLNLIASENVMSPLAESVYMSDFMSRYAEGKPYKRYYQGTKYTDEIETLAMDLMNEITNSKDCDLRPTSGTIANAAVFRVLAEPGDKALIAPVQAGAHVSHTKFGTLGALGIQHIEMPFDEENINVDVDKAIKMIEEVKPKFVVLGGSLYLFPHPTKELAPHVHAVGAKLVYDAAHVYGLIEGKVWSSPLKEGADIMTVSTHKTFPGPQGGAIFSDGSEVFKQVSRTIFPWFVSNHHLHRLPATAVTAIEMKYFGESYANQITRNSKALAEALAERGFKVIGENLGYTKSHQVAVDVRQFGGGNKIAKLLEDANIIVNKNLLPYDKPENVSDPSGLRIGVQEMTRYGMKESEMEEIAELFKKVIIDKKDVNKVKKEVIDMRKNFLEVKYTFDDMKDLEKYSSKSLKLII</sequence>
<comment type="function">
    <text evidence="1">Catalyzes the reversible interconversion of serine and glycine with a modified folate serving as the one-carbon carrier. Also exhibits a pteridine-independent aldolase activity toward beta-hydroxyamino acids, producing glycine and aldehydes, via a retro-aldol mechanism.</text>
</comment>
<comment type="cofactor">
    <cofactor evidence="1">
        <name>pyridoxal 5'-phosphate</name>
        <dbReference type="ChEBI" id="CHEBI:597326"/>
    </cofactor>
</comment>
<comment type="pathway">
    <text evidence="1">Amino-acid biosynthesis; glycine biosynthesis; glycine from L-serine: step 1/1.</text>
</comment>
<comment type="subunit">
    <text evidence="1">Homodimer.</text>
</comment>
<comment type="subcellular location">
    <subcellularLocation>
        <location evidence="1">Cytoplasm</location>
    </subcellularLocation>
</comment>
<comment type="similarity">
    <text evidence="1">Belongs to the SHMT family.</text>
</comment>
<organism>
    <name type="scientific">Saccharolobus islandicus (strain M.14.25 / Kamchatka #1)</name>
    <name type="common">Sulfolobus islandicus</name>
    <dbReference type="NCBI Taxonomy" id="427317"/>
    <lineage>
        <taxon>Archaea</taxon>
        <taxon>Thermoproteota</taxon>
        <taxon>Thermoprotei</taxon>
        <taxon>Sulfolobales</taxon>
        <taxon>Sulfolobaceae</taxon>
        <taxon>Saccharolobus</taxon>
    </lineage>
</organism>
<feature type="chain" id="PRO_1000202274" description="Serine hydroxymethyltransferase">
    <location>
        <begin position="1"/>
        <end position="433"/>
    </location>
</feature>
<feature type="binding site" evidence="1">
    <location>
        <begin position="121"/>
        <end position="123"/>
    </location>
    <ligand>
        <name>(6S)-5,6,7,8-tetrahydrofolate</name>
        <dbReference type="ChEBI" id="CHEBI:57453"/>
    </ligand>
</feature>
<feature type="binding site" evidence="1">
    <location>
        <position position="243"/>
    </location>
    <ligand>
        <name>(6S)-5,6,7,8-tetrahydrofolate</name>
        <dbReference type="ChEBI" id="CHEBI:57453"/>
    </ligand>
</feature>
<feature type="site" description="Plays an important role in substrate specificity" evidence="1">
    <location>
        <position position="226"/>
    </location>
</feature>
<feature type="modified residue" description="N6-(pyridoxal phosphate)lysine" evidence="1">
    <location>
        <position position="227"/>
    </location>
</feature>
<gene>
    <name evidence="1" type="primary">glyA</name>
    <name type="ordered locus">M1425_1583</name>
</gene>
<name>GLYA_SACI4</name>
<proteinExistence type="inferred from homology"/>
<evidence type="ECO:0000255" key="1">
    <source>
        <dbReference type="HAMAP-Rule" id="MF_00051"/>
    </source>
</evidence>
<protein>
    <recommendedName>
        <fullName evidence="1">Serine hydroxymethyltransferase</fullName>
        <shortName evidence="1">SHMT</shortName>
        <shortName evidence="1">Serine methylase</shortName>
        <ecNumber evidence="1">2.1.2.-</ecNumber>
    </recommendedName>
</protein>
<keyword id="KW-0028">Amino-acid biosynthesis</keyword>
<keyword id="KW-0963">Cytoplasm</keyword>
<keyword id="KW-0554">One-carbon metabolism</keyword>
<keyword id="KW-0663">Pyridoxal phosphate</keyword>
<keyword id="KW-0808">Transferase</keyword>
<dbReference type="EC" id="2.1.2.-" evidence="1"/>
<dbReference type="EMBL" id="CP001400">
    <property type="protein sequence ID" value="ACP38332.1"/>
    <property type="molecule type" value="Genomic_DNA"/>
</dbReference>
<dbReference type="RefSeq" id="WP_012711576.1">
    <property type="nucleotide sequence ID" value="NC_012588.1"/>
</dbReference>
<dbReference type="SMR" id="C3MWN2"/>
<dbReference type="GeneID" id="7794034"/>
<dbReference type="KEGG" id="sia:M1425_1583"/>
<dbReference type="HOGENOM" id="CLU_022477_2_1_2"/>
<dbReference type="UniPathway" id="UPA00288">
    <property type="reaction ID" value="UER01023"/>
</dbReference>
<dbReference type="Proteomes" id="UP000001350">
    <property type="component" value="Chromosome"/>
</dbReference>
<dbReference type="GO" id="GO:0005737">
    <property type="term" value="C:cytoplasm"/>
    <property type="evidence" value="ECO:0007669"/>
    <property type="project" value="UniProtKB-SubCell"/>
</dbReference>
<dbReference type="GO" id="GO:0004372">
    <property type="term" value="F:glycine hydroxymethyltransferase activity"/>
    <property type="evidence" value="ECO:0007669"/>
    <property type="project" value="UniProtKB-UniRule"/>
</dbReference>
<dbReference type="GO" id="GO:0030170">
    <property type="term" value="F:pyridoxal phosphate binding"/>
    <property type="evidence" value="ECO:0007669"/>
    <property type="project" value="UniProtKB-UniRule"/>
</dbReference>
<dbReference type="GO" id="GO:0019264">
    <property type="term" value="P:glycine biosynthetic process from serine"/>
    <property type="evidence" value="ECO:0007669"/>
    <property type="project" value="UniProtKB-UniRule"/>
</dbReference>
<dbReference type="GO" id="GO:0035999">
    <property type="term" value="P:tetrahydrofolate interconversion"/>
    <property type="evidence" value="ECO:0007669"/>
    <property type="project" value="InterPro"/>
</dbReference>
<dbReference type="CDD" id="cd00378">
    <property type="entry name" value="SHMT"/>
    <property type="match status" value="1"/>
</dbReference>
<dbReference type="FunFam" id="3.40.640.10:FF:000101">
    <property type="entry name" value="Serine hydroxymethyltransferase"/>
    <property type="match status" value="1"/>
</dbReference>
<dbReference type="FunFam" id="3.90.1150.10:FF:000136">
    <property type="entry name" value="Serine hydroxymethyltransferase"/>
    <property type="match status" value="1"/>
</dbReference>
<dbReference type="Gene3D" id="3.90.1150.10">
    <property type="entry name" value="Aspartate Aminotransferase, domain 1"/>
    <property type="match status" value="1"/>
</dbReference>
<dbReference type="Gene3D" id="3.40.640.10">
    <property type="entry name" value="Type I PLP-dependent aspartate aminotransferase-like (Major domain)"/>
    <property type="match status" value="1"/>
</dbReference>
<dbReference type="HAMAP" id="MF_00051">
    <property type="entry name" value="SHMT"/>
    <property type="match status" value="1"/>
</dbReference>
<dbReference type="InterPro" id="IPR015424">
    <property type="entry name" value="PyrdxlP-dep_Trfase"/>
</dbReference>
<dbReference type="InterPro" id="IPR015421">
    <property type="entry name" value="PyrdxlP-dep_Trfase_major"/>
</dbReference>
<dbReference type="InterPro" id="IPR015422">
    <property type="entry name" value="PyrdxlP-dep_Trfase_small"/>
</dbReference>
<dbReference type="InterPro" id="IPR001085">
    <property type="entry name" value="Ser_HO-MeTrfase"/>
</dbReference>
<dbReference type="InterPro" id="IPR049943">
    <property type="entry name" value="Ser_HO-MeTrfase-like"/>
</dbReference>
<dbReference type="InterPro" id="IPR019798">
    <property type="entry name" value="Ser_HO-MeTrfase_PLP_BS"/>
</dbReference>
<dbReference type="InterPro" id="IPR039429">
    <property type="entry name" value="SHMT-like_dom"/>
</dbReference>
<dbReference type="NCBIfam" id="NF000586">
    <property type="entry name" value="PRK00011.1"/>
    <property type="match status" value="1"/>
</dbReference>
<dbReference type="PANTHER" id="PTHR11680">
    <property type="entry name" value="SERINE HYDROXYMETHYLTRANSFERASE"/>
    <property type="match status" value="1"/>
</dbReference>
<dbReference type="PANTHER" id="PTHR11680:SF35">
    <property type="entry name" value="SERINE HYDROXYMETHYLTRANSFERASE 1"/>
    <property type="match status" value="1"/>
</dbReference>
<dbReference type="Pfam" id="PF00464">
    <property type="entry name" value="SHMT"/>
    <property type="match status" value="1"/>
</dbReference>
<dbReference type="PIRSF" id="PIRSF000412">
    <property type="entry name" value="SHMT"/>
    <property type="match status" value="1"/>
</dbReference>
<dbReference type="SUPFAM" id="SSF53383">
    <property type="entry name" value="PLP-dependent transferases"/>
    <property type="match status" value="1"/>
</dbReference>
<dbReference type="PROSITE" id="PS00096">
    <property type="entry name" value="SHMT"/>
    <property type="match status" value="1"/>
</dbReference>